<comment type="function">
    <text evidence="1 5">Sequence-specific RNA-binding protein which participates in the control of pre-mRNA splicing (PubMed:28785060). Can either activate or suppress exon inclusion. Acts additively with RBMX to promote exon 7 inclusion of the survival motor neuron SMN2. Activates the splicing of MAPT/Tau exon 10. Alters pre-mRNA splicing patterns by antagonizing the effects of splicing regulators, like RBMX. Binds to the AG-rich SE2 domain in the SMN exon 7 RNA. Binds to pre-mRNA (By similarity).</text>
</comment>
<comment type="subunit">
    <text evidence="1 2 5">Found in a pre-mRNA exonic splicing enhancer (ESE) complex with TRA2B/SFRS10, SNRNP70, SNRPA1 and SRRM1. Binds to A3 enhancer proteins SFRS4, SFRS5, SFRS6 and SFRS9. Interacts with CPSF6, RBMX, RNPS1 and phosphorylated SFRS13A (By similarity). Interacts with SAFB/SAFB1 (By similarity). Interacts with ILDR1 (via C-terminus) and ILDR2 (PubMed:28785060).</text>
</comment>
<comment type="subcellular location">
    <subcellularLocation>
        <location evidence="5">Nucleus</location>
    </subcellularLocation>
</comment>
<comment type="alternative products">
    <event type="alternative splicing"/>
    <isoform>
        <id>P62996-1</id>
        <name>1</name>
        <sequence type="displayed"/>
    </isoform>
    <isoform>
        <id>P62996-2</id>
        <name>2</name>
        <sequence type="described" ref="VSP_011509 VSP_011510"/>
    </isoform>
</comment>
<comment type="tissue specificity">
    <text evidence="5 7">Widely expressed. Highly expressed in uterus and brain. Expressed in inner ear (PubMed:28785060).</text>
</comment>
<comment type="induction">
    <text evidence="6">Induced by reoxygenation following hypoxia and by exposure to silica. Repressed by interferon gamma, LPS and TPA.</text>
</comment>
<comment type="PTM">
    <text evidence="1">Phosphorylated in the RS domains.</text>
</comment>
<comment type="similarity">
    <text evidence="9">Belongs to the splicing factor SR family.</text>
</comment>
<feature type="initiator methionine" description="Removed" evidence="1">
    <location>
        <position position="1"/>
    </location>
</feature>
<feature type="chain" id="PRO_0000081984" description="Transformer-2 protein homolog beta">
    <location>
        <begin position="2"/>
        <end position="288"/>
    </location>
</feature>
<feature type="domain" description="RRM" evidence="3">
    <location>
        <begin position="118"/>
        <end position="196"/>
    </location>
</feature>
<feature type="region of interest" description="Disordered" evidence="4">
    <location>
        <begin position="1"/>
        <end position="114"/>
    </location>
</feature>
<feature type="region of interest" description="Linker">
    <location>
        <begin position="193"/>
        <end position="230"/>
    </location>
</feature>
<feature type="region of interest" description="Disordered" evidence="4">
    <location>
        <begin position="196"/>
        <end position="225"/>
    </location>
</feature>
<feature type="region of interest" description="Disordered" evidence="4">
    <location>
        <begin position="242"/>
        <end position="288"/>
    </location>
</feature>
<feature type="compositionally biased region" description="Low complexity" evidence="4">
    <location>
        <begin position="17"/>
        <end position="28"/>
    </location>
</feature>
<feature type="compositionally biased region" description="Basic residues" evidence="4">
    <location>
        <begin position="59"/>
        <end position="109"/>
    </location>
</feature>
<feature type="compositionally biased region" description="Basic residues" evidence="4">
    <location>
        <begin position="274"/>
        <end position="288"/>
    </location>
</feature>
<feature type="modified residue" description="N-acetylserine" evidence="1">
    <location>
        <position position="2"/>
    </location>
</feature>
<feature type="modified residue" description="Phosphoserine" evidence="1">
    <location>
        <position position="2"/>
    </location>
</feature>
<feature type="modified residue" description="Phosphoserine" evidence="1">
    <location>
        <position position="4"/>
    </location>
</feature>
<feature type="modified residue" description="Phosphoserine" evidence="1">
    <location>
        <position position="14"/>
    </location>
</feature>
<feature type="modified residue" description="Phosphoserine" evidence="2">
    <location>
        <position position="29"/>
    </location>
</feature>
<feature type="modified residue" description="Phosphothreonine" evidence="2">
    <location>
        <position position="33"/>
    </location>
</feature>
<feature type="modified residue" description="Phosphoserine" evidence="1">
    <location>
        <position position="83"/>
    </location>
</feature>
<feature type="modified residue" description="Phosphoserine" evidence="1">
    <location>
        <position position="85"/>
    </location>
</feature>
<feature type="modified residue" description="Phosphoserine" evidence="1">
    <location>
        <position position="87"/>
    </location>
</feature>
<feature type="modified residue" description="Phosphoserine" evidence="1">
    <location>
        <position position="95"/>
    </location>
</feature>
<feature type="modified residue" description="Phosphoserine" evidence="1">
    <location>
        <position position="97"/>
    </location>
</feature>
<feature type="modified residue" description="Phosphoserine" evidence="1">
    <location>
        <position position="99"/>
    </location>
</feature>
<feature type="modified residue" description="Phosphothreonine" evidence="1">
    <location>
        <position position="103"/>
    </location>
</feature>
<feature type="modified residue" description="Phosphothreonine" evidence="1">
    <location>
        <position position="201"/>
    </location>
</feature>
<feature type="modified residue" description="Phosphothreonine" evidence="1">
    <location>
        <position position="203"/>
    </location>
</feature>
<feature type="modified residue" description="Phosphoserine" evidence="1">
    <location>
        <position position="215"/>
    </location>
</feature>
<feature type="modified residue" description="Phosphoserine" evidence="1">
    <location>
        <position position="237"/>
    </location>
</feature>
<feature type="modified residue" description="Asymmetric dimethylarginine; alternate" evidence="11">
    <location>
        <position position="241"/>
    </location>
</feature>
<feature type="modified residue" description="Dimethylated arginine; alternate" evidence="1">
    <location>
        <position position="241"/>
    </location>
</feature>
<feature type="modified residue" description="Omega-N-methylarginine; alternate" evidence="11">
    <location>
        <position position="241"/>
    </location>
</feature>
<feature type="cross-link" description="Glycyl lysine isopeptide (Lys-Gly) (interchain with G-Cter in SUMO2)" evidence="1">
    <location>
        <position position="197"/>
    </location>
</feature>
<feature type="splice variant" id="VSP_011509" description="In isoform 2." evidence="8">
    <original>AHGSGKSARHTPARSR</original>
    <variation>RHLTSFINEYLKLRNK</variation>
    <location>
        <begin position="23"/>
        <end position="38"/>
    </location>
</feature>
<feature type="splice variant" id="VSP_011510" description="In isoform 2." evidence="8">
    <location>
        <begin position="39"/>
        <end position="288"/>
    </location>
</feature>
<gene>
    <name evidence="10" type="primary">Tra2b</name>
    <name type="synonym">Sfrs10</name>
    <name type="synonym">Silg41</name>
</gene>
<reference key="1">
    <citation type="journal article" date="1995" name="J. Immunol.">
        <title>Isolation of nine gene sequences induced by silica in murine macrophages.</title>
        <authorList>
            <person name="Segade F."/>
            <person name="Claudio E."/>
            <person name="Wrobel K."/>
            <person name="Ramos S."/>
            <person name="Lazo P.S."/>
        </authorList>
    </citation>
    <scope>NUCLEOTIDE SEQUENCE [MRNA] (ISOFORM 1)</scope>
    <scope>INDUCTION</scope>
    <source>
        <tissue>Macrophage</tissue>
    </source>
</reference>
<reference key="2">
    <citation type="journal article" date="1996" name="FEBS Lett.">
        <title>Molecular cloning of a mouse homologue for the Drosophila splicing regulator Tra2.</title>
        <authorList>
            <person name="Segade F."/>
            <person name="Hurle B."/>
            <person name="Claudio E."/>
            <person name="Ramos S."/>
            <person name="Lazo P.S."/>
        </authorList>
    </citation>
    <scope>NUCLEOTIDE SEQUENCE [MRNA] (ISOFORM 1)</scope>
    <scope>TISSUE SPECIFICITY</scope>
</reference>
<reference key="3">
    <citation type="journal article" date="2005" name="Science">
        <title>The transcriptional landscape of the mammalian genome.</title>
        <authorList>
            <person name="Carninci P."/>
            <person name="Kasukawa T."/>
            <person name="Katayama S."/>
            <person name="Gough J."/>
            <person name="Frith M.C."/>
            <person name="Maeda N."/>
            <person name="Oyama R."/>
            <person name="Ravasi T."/>
            <person name="Lenhard B."/>
            <person name="Wells C."/>
            <person name="Kodzius R."/>
            <person name="Shimokawa K."/>
            <person name="Bajic V.B."/>
            <person name="Brenner S.E."/>
            <person name="Batalov S."/>
            <person name="Forrest A.R."/>
            <person name="Zavolan M."/>
            <person name="Davis M.J."/>
            <person name="Wilming L.G."/>
            <person name="Aidinis V."/>
            <person name="Allen J.E."/>
            <person name="Ambesi-Impiombato A."/>
            <person name="Apweiler R."/>
            <person name="Aturaliya R.N."/>
            <person name="Bailey T.L."/>
            <person name="Bansal M."/>
            <person name="Baxter L."/>
            <person name="Beisel K.W."/>
            <person name="Bersano T."/>
            <person name="Bono H."/>
            <person name="Chalk A.M."/>
            <person name="Chiu K.P."/>
            <person name="Choudhary V."/>
            <person name="Christoffels A."/>
            <person name="Clutterbuck D.R."/>
            <person name="Crowe M.L."/>
            <person name="Dalla E."/>
            <person name="Dalrymple B.P."/>
            <person name="de Bono B."/>
            <person name="Della Gatta G."/>
            <person name="di Bernardo D."/>
            <person name="Down T."/>
            <person name="Engstrom P."/>
            <person name="Fagiolini M."/>
            <person name="Faulkner G."/>
            <person name="Fletcher C.F."/>
            <person name="Fukushima T."/>
            <person name="Furuno M."/>
            <person name="Futaki S."/>
            <person name="Gariboldi M."/>
            <person name="Georgii-Hemming P."/>
            <person name="Gingeras T.R."/>
            <person name="Gojobori T."/>
            <person name="Green R.E."/>
            <person name="Gustincich S."/>
            <person name="Harbers M."/>
            <person name="Hayashi Y."/>
            <person name="Hensch T.K."/>
            <person name="Hirokawa N."/>
            <person name="Hill D."/>
            <person name="Huminiecki L."/>
            <person name="Iacono M."/>
            <person name="Ikeo K."/>
            <person name="Iwama A."/>
            <person name="Ishikawa T."/>
            <person name="Jakt M."/>
            <person name="Kanapin A."/>
            <person name="Katoh M."/>
            <person name="Kawasawa Y."/>
            <person name="Kelso J."/>
            <person name="Kitamura H."/>
            <person name="Kitano H."/>
            <person name="Kollias G."/>
            <person name="Krishnan S.P."/>
            <person name="Kruger A."/>
            <person name="Kummerfeld S.K."/>
            <person name="Kurochkin I.V."/>
            <person name="Lareau L.F."/>
            <person name="Lazarevic D."/>
            <person name="Lipovich L."/>
            <person name="Liu J."/>
            <person name="Liuni S."/>
            <person name="McWilliam S."/>
            <person name="Madan Babu M."/>
            <person name="Madera M."/>
            <person name="Marchionni L."/>
            <person name="Matsuda H."/>
            <person name="Matsuzawa S."/>
            <person name="Miki H."/>
            <person name="Mignone F."/>
            <person name="Miyake S."/>
            <person name="Morris K."/>
            <person name="Mottagui-Tabar S."/>
            <person name="Mulder N."/>
            <person name="Nakano N."/>
            <person name="Nakauchi H."/>
            <person name="Ng P."/>
            <person name="Nilsson R."/>
            <person name="Nishiguchi S."/>
            <person name="Nishikawa S."/>
            <person name="Nori F."/>
            <person name="Ohara O."/>
            <person name="Okazaki Y."/>
            <person name="Orlando V."/>
            <person name="Pang K.C."/>
            <person name="Pavan W.J."/>
            <person name="Pavesi G."/>
            <person name="Pesole G."/>
            <person name="Petrovsky N."/>
            <person name="Piazza S."/>
            <person name="Reed J."/>
            <person name="Reid J.F."/>
            <person name="Ring B.Z."/>
            <person name="Ringwald M."/>
            <person name="Rost B."/>
            <person name="Ruan Y."/>
            <person name="Salzberg S.L."/>
            <person name="Sandelin A."/>
            <person name="Schneider C."/>
            <person name="Schoenbach C."/>
            <person name="Sekiguchi K."/>
            <person name="Semple C.A."/>
            <person name="Seno S."/>
            <person name="Sessa L."/>
            <person name="Sheng Y."/>
            <person name="Shibata Y."/>
            <person name="Shimada H."/>
            <person name="Shimada K."/>
            <person name="Silva D."/>
            <person name="Sinclair B."/>
            <person name="Sperling S."/>
            <person name="Stupka E."/>
            <person name="Sugiura K."/>
            <person name="Sultana R."/>
            <person name="Takenaka Y."/>
            <person name="Taki K."/>
            <person name="Tammoja K."/>
            <person name="Tan S.L."/>
            <person name="Tang S."/>
            <person name="Taylor M.S."/>
            <person name="Tegner J."/>
            <person name="Teichmann S.A."/>
            <person name="Ueda H.R."/>
            <person name="van Nimwegen E."/>
            <person name="Verardo R."/>
            <person name="Wei C.L."/>
            <person name="Yagi K."/>
            <person name="Yamanishi H."/>
            <person name="Zabarovsky E."/>
            <person name="Zhu S."/>
            <person name="Zimmer A."/>
            <person name="Hide W."/>
            <person name="Bult C."/>
            <person name="Grimmond S.M."/>
            <person name="Teasdale R.D."/>
            <person name="Liu E.T."/>
            <person name="Brusic V."/>
            <person name="Quackenbush J."/>
            <person name="Wahlestedt C."/>
            <person name="Mattick J.S."/>
            <person name="Hume D.A."/>
            <person name="Kai C."/>
            <person name="Sasaki D."/>
            <person name="Tomaru Y."/>
            <person name="Fukuda S."/>
            <person name="Kanamori-Katayama M."/>
            <person name="Suzuki M."/>
            <person name="Aoki J."/>
            <person name="Arakawa T."/>
            <person name="Iida J."/>
            <person name="Imamura K."/>
            <person name="Itoh M."/>
            <person name="Kato T."/>
            <person name="Kawaji H."/>
            <person name="Kawagashira N."/>
            <person name="Kawashima T."/>
            <person name="Kojima M."/>
            <person name="Kondo S."/>
            <person name="Konno H."/>
            <person name="Nakano K."/>
            <person name="Ninomiya N."/>
            <person name="Nishio T."/>
            <person name="Okada M."/>
            <person name="Plessy C."/>
            <person name="Shibata K."/>
            <person name="Shiraki T."/>
            <person name="Suzuki S."/>
            <person name="Tagami M."/>
            <person name="Waki K."/>
            <person name="Watahiki A."/>
            <person name="Okamura-Oho Y."/>
            <person name="Suzuki H."/>
            <person name="Kawai J."/>
            <person name="Hayashizaki Y."/>
        </authorList>
    </citation>
    <scope>NUCLEOTIDE SEQUENCE [LARGE SCALE MRNA] (ISOFORMS 1 AND 2)</scope>
    <source>
        <strain>C57BL/6J</strain>
        <tissue>Thymus</tissue>
    </source>
</reference>
<reference key="4">
    <citation type="journal article" date="2004" name="Genome Res.">
        <title>The status, quality, and expansion of the NIH full-length cDNA project: the Mammalian Gene Collection (MGC).</title>
        <authorList>
            <consortium name="The MGC Project Team"/>
        </authorList>
    </citation>
    <scope>NUCLEOTIDE SEQUENCE [LARGE SCALE MRNA] (ISOFORM 1)</scope>
    <source>
        <tissue>Brain</tissue>
    </source>
</reference>
<reference key="5">
    <citation type="journal article" date="2010" name="Cell">
        <title>A tissue-specific atlas of mouse protein phosphorylation and expression.</title>
        <authorList>
            <person name="Huttlin E.L."/>
            <person name="Jedrychowski M.P."/>
            <person name="Elias J.E."/>
            <person name="Goswami T."/>
            <person name="Rad R."/>
            <person name="Beausoleil S.A."/>
            <person name="Villen J."/>
            <person name="Haas W."/>
            <person name="Sowa M.E."/>
            <person name="Gygi S.P."/>
        </authorList>
    </citation>
    <scope>IDENTIFICATION BY MASS SPECTROMETRY [LARGE SCALE ANALYSIS]</scope>
    <source>
        <tissue>Lung</tissue>
        <tissue>Pancreas</tissue>
        <tissue>Spleen</tissue>
        <tissue>Testis</tissue>
    </source>
</reference>
<reference key="6">
    <citation type="journal article" date="2014" name="Mol. Cell. Proteomics">
        <title>Immunoaffinity enrichment and mass spectrometry analysis of protein methylation.</title>
        <authorList>
            <person name="Guo A."/>
            <person name="Gu H."/>
            <person name="Zhou J."/>
            <person name="Mulhern D."/>
            <person name="Wang Y."/>
            <person name="Lee K.A."/>
            <person name="Yang V."/>
            <person name="Aguiar M."/>
            <person name="Kornhauser J."/>
            <person name="Jia X."/>
            <person name="Ren J."/>
            <person name="Beausoleil S.A."/>
            <person name="Silva J.C."/>
            <person name="Vemulapalli V."/>
            <person name="Bedford M.T."/>
            <person name="Comb M.J."/>
        </authorList>
    </citation>
    <scope>METHYLATION [LARGE SCALE ANALYSIS] AT ARG-241</scope>
    <scope>IDENTIFICATION BY MASS SPECTROMETRY [LARGE SCALE ANALYSIS]</scope>
    <source>
        <tissue>Brain</tissue>
        <tissue>Embryo</tissue>
    </source>
</reference>
<reference key="7">
    <citation type="journal article" date="2017" name="Sci. Rep.">
        <title>Angulin proteins ILDR1 and ILDR2 regulate alternative pre-mRNA splicing through binding to splicing factors TRA2A, TRA2B, or SRSF1.</title>
        <authorList>
            <person name="Liu Y."/>
            <person name="Nie H."/>
            <person name="Liu C."/>
            <person name="Zhai X."/>
            <person name="Sang Q."/>
            <person name="Wang Y."/>
            <person name="Shi D."/>
            <person name="Wang L."/>
            <person name="Xu Z."/>
        </authorList>
    </citation>
    <scope>FUNCTION</scope>
    <scope>INTERACTION WITH ILDR1 AND ILDR2</scope>
    <scope>SUBCELLULAR LOCATION</scope>
    <scope>TISSUE SPECIFICITY</scope>
</reference>
<dbReference type="EMBL" id="X80232">
    <property type="protein sequence ID" value="CAA56518.1"/>
    <property type="molecule type" value="mRNA"/>
</dbReference>
<dbReference type="EMBL" id="AK049573">
    <property type="protein sequence ID" value="BAC33819.1"/>
    <property type="molecule type" value="mRNA"/>
</dbReference>
<dbReference type="EMBL" id="AK077418">
    <property type="protein sequence ID" value="BAC36791.1"/>
    <property type="molecule type" value="mRNA"/>
</dbReference>
<dbReference type="EMBL" id="AK080378">
    <property type="protein sequence ID" value="BAC37898.1"/>
    <property type="molecule type" value="mRNA"/>
</dbReference>
<dbReference type="EMBL" id="BC061177">
    <property type="protein sequence ID" value="AAH61177.1"/>
    <property type="molecule type" value="mRNA"/>
</dbReference>
<dbReference type="CCDS" id="CCDS37297.1">
    <molecule id="P62996-1"/>
</dbReference>
<dbReference type="PIR" id="S68798">
    <property type="entry name" value="S68798"/>
</dbReference>
<dbReference type="RefSeq" id="NP_001317483.1">
    <property type="nucleotide sequence ID" value="NM_001330554.1"/>
</dbReference>
<dbReference type="RefSeq" id="NP_001317484.1">
    <property type="nucleotide sequence ID" value="NM_001330555.1"/>
</dbReference>
<dbReference type="RefSeq" id="NP_033212.1">
    <molecule id="P62996-1"/>
    <property type="nucleotide sequence ID" value="NM_009186.5"/>
</dbReference>
<dbReference type="BMRB" id="P62996"/>
<dbReference type="SMR" id="P62996"/>
<dbReference type="BioGRID" id="203252">
    <property type="interactions" value="20"/>
</dbReference>
<dbReference type="FunCoup" id="P62996">
    <property type="interactions" value="4565"/>
</dbReference>
<dbReference type="IntAct" id="P62996">
    <property type="interactions" value="6"/>
</dbReference>
<dbReference type="MINT" id="P62996"/>
<dbReference type="STRING" id="10090.ENSMUSP00000124846"/>
<dbReference type="GlyGen" id="P62996">
    <property type="glycosylation" value="1 site"/>
</dbReference>
<dbReference type="iPTMnet" id="P62996"/>
<dbReference type="PhosphoSitePlus" id="P62996"/>
<dbReference type="SwissPalm" id="P62996"/>
<dbReference type="jPOST" id="P62996"/>
<dbReference type="PaxDb" id="10090-ENSMUSP00000124846"/>
<dbReference type="PeptideAtlas" id="P62996"/>
<dbReference type="ProteomicsDB" id="259300">
    <molecule id="P62996-1"/>
</dbReference>
<dbReference type="ProteomicsDB" id="259301">
    <molecule id="P62996-2"/>
</dbReference>
<dbReference type="Pumba" id="P62996"/>
<dbReference type="Antibodypedia" id="3190">
    <property type="antibodies" value="173 antibodies from 26 providers"/>
</dbReference>
<dbReference type="DNASU" id="20462"/>
<dbReference type="Ensembl" id="ENSMUST00000161286.8">
    <molecule id="P62996-1"/>
    <property type="protein sequence ID" value="ENSMUSP00000124846.2"/>
    <property type="gene ID" value="ENSMUSG00000022858.17"/>
</dbReference>
<dbReference type="GeneID" id="20462"/>
<dbReference type="KEGG" id="mmu:20462"/>
<dbReference type="UCSC" id="uc007ysc.1">
    <molecule id="P62996-1"/>
    <property type="organism name" value="mouse"/>
</dbReference>
<dbReference type="AGR" id="MGI:106016"/>
<dbReference type="CTD" id="6434"/>
<dbReference type="MGI" id="MGI:106016">
    <property type="gene designation" value="Tra2b"/>
</dbReference>
<dbReference type="VEuPathDB" id="HostDB:ENSMUSG00000022858"/>
<dbReference type="eggNOG" id="KOG0118">
    <property type="taxonomic scope" value="Eukaryota"/>
</dbReference>
<dbReference type="GeneTree" id="ENSGT00950000183009"/>
<dbReference type="HOGENOM" id="CLU_050438_3_0_1"/>
<dbReference type="InParanoid" id="P62996"/>
<dbReference type="OMA" id="RAKEECQ"/>
<dbReference type="OrthoDB" id="439808at2759"/>
<dbReference type="PhylomeDB" id="P62996"/>
<dbReference type="TreeFam" id="TF106265"/>
<dbReference type="Reactome" id="R-MMU-72163">
    <property type="pathway name" value="mRNA Splicing - Major Pathway"/>
</dbReference>
<dbReference type="Reactome" id="R-MMU-72203">
    <property type="pathway name" value="Processing of Capped Intron-Containing Pre-mRNA"/>
</dbReference>
<dbReference type="Reactome" id="R-MMU-9013418">
    <property type="pathway name" value="RHOBTB2 GTPase cycle"/>
</dbReference>
<dbReference type="Reactome" id="R-MMU-9013422">
    <property type="pathway name" value="RHOBTB1 GTPase cycle"/>
</dbReference>
<dbReference type="BioGRID-ORCS" id="20462">
    <property type="hits" value="15 hits in 81 CRISPR screens"/>
</dbReference>
<dbReference type="CD-CODE" id="DE1E139C">
    <property type="entry name" value="Chromatoid body"/>
</dbReference>
<dbReference type="ChiTaRS" id="Tra2b">
    <property type="organism name" value="mouse"/>
</dbReference>
<dbReference type="PRO" id="PR:P62996"/>
<dbReference type="Proteomes" id="UP000000589">
    <property type="component" value="Chromosome 16"/>
</dbReference>
<dbReference type="RNAct" id="P62996">
    <property type="molecule type" value="protein"/>
</dbReference>
<dbReference type="Bgee" id="ENSMUSG00000022858">
    <property type="expression patterns" value="Expressed in embryonic post-anal tail and 184 other cell types or tissues"/>
</dbReference>
<dbReference type="ExpressionAtlas" id="P62996">
    <property type="expression patterns" value="baseline and differential"/>
</dbReference>
<dbReference type="GO" id="GO:0001673">
    <property type="term" value="C:male germ cell nucleus"/>
    <property type="evidence" value="ECO:0000314"/>
    <property type="project" value="MGI"/>
</dbReference>
<dbReference type="GO" id="GO:0005637">
    <property type="term" value="C:nuclear inner membrane"/>
    <property type="evidence" value="ECO:0000314"/>
    <property type="project" value="MGI"/>
</dbReference>
<dbReference type="GO" id="GO:0005654">
    <property type="term" value="C:nucleoplasm"/>
    <property type="evidence" value="ECO:0007669"/>
    <property type="project" value="Ensembl"/>
</dbReference>
<dbReference type="GO" id="GO:0005634">
    <property type="term" value="C:nucleus"/>
    <property type="evidence" value="ECO:0000314"/>
    <property type="project" value="UniProtKB"/>
</dbReference>
<dbReference type="GO" id="GO:0005681">
    <property type="term" value="C:spliceosomal complex"/>
    <property type="evidence" value="ECO:0007669"/>
    <property type="project" value="Ensembl"/>
</dbReference>
<dbReference type="GO" id="GO:0042802">
    <property type="term" value="F:identical protein binding"/>
    <property type="evidence" value="ECO:0007669"/>
    <property type="project" value="Ensembl"/>
</dbReference>
<dbReference type="GO" id="GO:0003729">
    <property type="term" value="F:mRNA binding"/>
    <property type="evidence" value="ECO:0000250"/>
    <property type="project" value="UniProtKB"/>
</dbReference>
<dbReference type="GO" id="GO:0070717">
    <property type="term" value="F:poly-purine tract binding"/>
    <property type="evidence" value="ECO:0000314"/>
    <property type="project" value="MGI"/>
</dbReference>
<dbReference type="GO" id="GO:0036002">
    <property type="term" value="F:pre-mRNA binding"/>
    <property type="evidence" value="ECO:0000314"/>
    <property type="project" value="MGI"/>
</dbReference>
<dbReference type="GO" id="GO:0019904">
    <property type="term" value="F:protein domain specific binding"/>
    <property type="evidence" value="ECO:0007669"/>
    <property type="project" value="Ensembl"/>
</dbReference>
<dbReference type="GO" id="GO:0071333">
    <property type="term" value="P:cellular response to glucose stimulus"/>
    <property type="evidence" value="ECO:0007669"/>
    <property type="project" value="Ensembl"/>
</dbReference>
<dbReference type="GO" id="GO:0021796">
    <property type="term" value="P:cerebral cortex regionalization"/>
    <property type="evidence" value="ECO:0000315"/>
    <property type="project" value="MGI"/>
</dbReference>
<dbReference type="GO" id="GO:1990403">
    <property type="term" value="P:embryonic brain development"/>
    <property type="evidence" value="ECO:0000315"/>
    <property type="project" value="MGI"/>
</dbReference>
<dbReference type="GO" id="GO:0000398">
    <property type="term" value="P:mRNA splicing, via spliceosome"/>
    <property type="evidence" value="ECO:0000314"/>
    <property type="project" value="MGI"/>
</dbReference>
<dbReference type="GO" id="GO:0048026">
    <property type="term" value="P:positive regulation of mRNA splicing, via spliceosome"/>
    <property type="evidence" value="ECO:0000314"/>
    <property type="project" value="MGI"/>
</dbReference>
<dbReference type="GO" id="GO:0000381">
    <property type="term" value="P:regulation of alternative mRNA splicing, via spliceosome"/>
    <property type="evidence" value="ECO:0000250"/>
    <property type="project" value="UniProtKB"/>
</dbReference>
<dbReference type="GO" id="GO:0043484">
    <property type="term" value="P:regulation of RNA splicing"/>
    <property type="evidence" value="ECO:0000315"/>
    <property type="project" value="UniProtKB"/>
</dbReference>
<dbReference type="CDD" id="cd12363">
    <property type="entry name" value="RRM_TRA2"/>
    <property type="match status" value="1"/>
</dbReference>
<dbReference type="FunFam" id="3.30.70.330:FF:000160">
    <property type="entry name" value="Transformer-2 protein homolog beta"/>
    <property type="match status" value="1"/>
</dbReference>
<dbReference type="Gene3D" id="3.30.70.330">
    <property type="match status" value="1"/>
</dbReference>
<dbReference type="InterPro" id="IPR012677">
    <property type="entry name" value="Nucleotide-bd_a/b_plait_sf"/>
</dbReference>
<dbReference type="InterPro" id="IPR035979">
    <property type="entry name" value="RBD_domain_sf"/>
</dbReference>
<dbReference type="InterPro" id="IPR050441">
    <property type="entry name" value="RBM"/>
</dbReference>
<dbReference type="InterPro" id="IPR000504">
    <property type="entry name" value="RRM_dom"/>
</dbReference>
<dbReference type="PANTHER" id="PTHR48034">
    <property type="entry name" value="TRANSFORMER-2 SEX-DETERMINING PROTEIN-RELATED"/>
    <property type="match status" value="1"/>
</dbReference>
<dbReference type="Pfam" id="PF00076">
    <property type="entry name" value="RRM_1"/>
    <property type="match status" value="1"/>
</dbReference>
<dbReference type="SMART" id="SM00360">
    <property type="entry name" value="RRM"/>
    <property type="match status" value="1"/>
</dbReference>
<dbReference type="SUPFAM" id="SSF54928">
    <property type="entry name" value="RNA-binding domain, RBD"/>
    <property type="match status" value="1"/>
</dbReference>
<dbReference type="PROSITE" id="PS50102">
    <property type="entry name" value="RRM"/>
    <property type="match status" value="1"/>
</dbReference>
<sequence length="288" mass="33666">MSDSGEQNYGERESRSASRSGSAHGSGKSARHTPARSRSKEDSRRSRSKSRSRSESRSRSRRSSRRHYTRSRSRSRSHRRSRSRSYSRDYRRRHSHSHSPMSTRRRHVGNRANPDPNCCLGVFGLSLYTTERDLREVFSKYGPIADVSIVYDQQSRRSRGFAFVYFENVDDAKEAKERANGMELDGRRIRVDFSITKRPHTPTPGIYMGRPTYGSSRRRDYYDRGYDRGYDDRDYYSRSYRGGGGGGGGWRAAQDRDQIYRRRSPSPYYSRGGYRSRSRSRSYSPRRY</sequence>
<keyword id="KW-0007">Acetylation</keyword>
<keyword id="KW-0010">Activator</keyword>
<keyword id="KW-0025">Alternative splicing</keyword>
<keyword id="KW-1017">Isopeptide bond</keyword>
<keyword id="KW-0488">Methylation</keyword>
<keyword id="KW-0507">mRNA processing</keyword>
<keyword id="KW-0508">mRNA splicing</keyword>
<keyword id="KW-0539">Nucleus</keyword>
<keyword id="KW-0597">Phosphoprotein</keyword>
<keyword id="KW-1185">Reference proteome</keyword>
<keyword id="KW-0678">Repressor</keyword>
<keyword id="KW-0694">RNA-binding</keyword>
<keyword id="KW-0832">Ubl conjugation</keyword>
<proteinExistence type="evidence at protein level"/>
<protein>
    <recommendedName>
        <fullName evidence="9">Transformer-2 protein homolog beta</fullName>
        <shortName>TRA-2 beta</shortName>
        <shortName>TRA2-beta</shortName>
    </recommendedName>
    <alternativeName>
        <fullName>Silica-induced gene 41 protein</fullName>
        <shortName>SIG-41</shortName>
    </alternativeName>
    <alternativeName>
        <fullName>Splicing factor, arginine/serine-rich 10</fullName>
    </alternativeName>
    <alternativeName>
        <fullName>Transformer-2 protein homolog B</fullName>
    </alternativeName>
</protein>
<accession>P62996</accession>
<accession>O15449</accession>
<accession>Q15815</accession>
<accession>Q64283</accession>
<evidence type="ECO:0000250" key="1">
    <source>
        <dbReference type="UniProtKB" id="P62995"/>
    </source>
</evidence>
<evidence type="ECO:0000250" key="2">
    <source>
        <dbReference type="UniProtKB" id="P62997"/>
    </source>
</evidence>
<evidence type="ECO:0000255" key="3">
    <source>
        <dbReference type="PROSITE-ProRule" id="PRU00176"/>
    </source>
</evidence>
<evidence type="ECO:0000256" key="4">
    <source>
        <dbReference type="SAM" id="MobiDB-lite"/>
    </source>
</evidence>
<evidence type="ECO:0000269" key="5">
    <source>
    </source>
</evidence>
<evidence type="ECO:0000269" key="6">
    <source>
    </source>
</evidence>
<evidence type="ECO:0000269" key="7">
    <source>
    </source>
</evidence>
<evidence type="ECO:0000303" key="8">
    <source>
    </source>
</evidence>
<evidence type="ECO:0000305" key="9"/>
<evidence type="ECO:0000312" key="10">
    <source>
        <dbReference type="MGI" id="MGI:106016"/>
    </source>
</evidence>
<evidence type="ECO:0007744" key="11">
    <source>
    </source>
</evidence>
<organism>
    <name type="scientific">Mus musculus</name>
    <name type="common">Mouse</name>
    <dbReference type="NCBI Taxonomy" id="10090"/>
    <lineage>
        <taxon>Eukaryota</taxon>
        <taxon>Metazoa</taxon>
        <taxon>Chordata</taxon>
        <taxon>Craniata</taxon>
        <taxon>Vertebrata</taxon>
        <taxon>Euteleostomi</taxon>
        <taxon>Mammalia</taxon>
        <taxon>Eutheria</taxon>
        <taxon>Euarchontoglires</taxon>
        <taxon>Glires</taxon>
        <taxon>Rodentia</taxon>
        <taxon>Myomorpha</taxon>
        <taxon>Muroidea</taxon>
        <taxon>Muridae</taxon>
        <taxon>Murinae</taxon>
        <taxon>Mus</taxon>
        <taxon>Mus</taxon>
    </lineage>
</organism>
<name>TRA2B_MOUSE</name>